<protein>
    <recommendedName>
        <fullName evidence="1">Glucose-6-phosphate isomerase</fullName>
        <shortName evidence="1">GPI</shortName>
        <ecNumber evidence="1">5.3.1.9</ecNumber>
    </recommendedName>
    <alternativeName>
        <fullName evidence="1">Phosphoglucose isomerase</fullName>
        <shortName evidence="1">PGI</shortName>
    </alternativeName>
    <alternativeName>
        <fullName evidence="1">Phosphohexose isomerase</fullName>
        <shortName evidence="1">PHI</shortName>
    </alternativeName>
</protein>
<sequence>MTTLTQSTTWKALQTHSSQLPHMRELFAQNPQRFEQMSVAACGLFLDYSKNRVNDETLKLLFSLAKEAKLSEKITAMFNGDVINNTEQRSVLHTALRSKATQTIIAEGANIVPEVQQTLAKMAKFVGSVQSGEWKGYTGKAITDIVSIGIGGSFLGPKIVSQALRPYWQEGLNCHFVANVDATSICEKLKNLNAETTLFVMSSKSFSTQETLTNTLSAKDWFLGQGASQQDVAKHFVAVTSNVTKATEFGMDANNIFPMWDWVGGRYSLWSAIGLPIALLVGMDNFTALLDGAHQMDQHFADTPIEQNMPVIMAMLSVLYGNFHGAQSHVILTYDHYLRGLPAYFQQLDMESNGKSVTLDGTDVDYSTGPVIWGGEGTNGQHAYHQLLHQGTALIPADFIMPLQSHNPLGEHHDQLASNCFGQTQALMQGRTYDEALAELSNSKLDEQQKPLIAKHKVMVGNKPSNTLLMDKLTPTTLGALIALYEHRTFVQGAIWQINSFDQWGVELGKQLGNDVLERIGADHDATDLDGSSNALVNLYRKGKL</sequence>
<feature type="chain" id="PRO_1000014014" description="Glucose-6-phosphate isomerase">
    <location>
        <begin position="1"/>
        <end position="545"/>
    </location>
</feature>
<feature type="active site" description="Proton donor" evidence="1">
    <location>
        <position position="351"/>
    </location>
</feature>
<feature type="active site" evidence="1">
    <location>
        <position position="382"/>
    </location>
</feature>
<feature type="active site" evidence="1">
    <location>
        <position position="510"/>
    </location>
</feature>
<evidence type="ECO:0000255" key="1">
    <source>
        <dbReference type="HAMAP-Rule" id="MF_00473"/>
    </source>
</evidence>
<name>G6PI_SHEFN</name>
<gene>
    <name evidence="1" type="primary">pgi</name>
    <name type="ordered locus">Sfri_2901</name>
</gene>
<reference key="1">
    <citation type="submission" date="2006-08" db="EMBL/GenBank/DDBJ databases">
        <title>Complete sequence of Shewanella frigidimarina NCIMB 400.</title>
        <authorList>
            <consortium name="US DOE Joint Genome Institute"/>
            <person name="Copeland A."/>
            <person name="Lucas S."/>
            <person name="Lapidus A."/>
            <person name="Barry K."/>
            <person name="Detter J.C."/>
            <person name="Glavina del Rio T."/>
            <person name="Hammon N."/>
            <person name="Israni S."/>
            <person name="Dalin E."/>
            <person name="Tice H."/>
            <person name="Pitluck S."/>
            <person name="Fredrickson J.K."/>
            <person name="Kolker E."/>
            <person name="McCuel L.A."/>
            <person name="DiChristina T."/>
            <person name="Nealson K.H."/>
            <person name="Newman D."/>
            <person name="Tiedje J.M."/>
            <person name="Zhou J."/>
            <person name="Romine M.F."/>
            <person name="Culley D.E."/>
            <person name="Serres M."/>
            <person name="Chertkov O."/>
            <person name="Brettin T."/>
            <person name="Bruce D."/>
            <person name="Han C."/>
            <person name="Tapia R."/>
            <person name="Gilna P."/>
            <person name="Schmutz J."/>
            <person name="Larimer F."/>
            <person name="Land M."/>
            <person name="Hauser L."/>
            <person name="Kyrpides N."/>
            <person name="Mikhailova N."/>
            <person name="Richardson P."/>
        </authorList>
    </citation>
    <scope>NUCLEOTIDE SEQUENCE [LARGE SCALE GENOMIC DNA]</scope>
    <source>
        <strain>NCIMB 400</strain>
    </source>
</reference>
<organism>
    <name type="scientific">Shewanella frigidimarina (strain NCIMB 400)</name>
    <dbReference type="NCBI Taxonomy" id="318167"/>
    <lineage>
        <taxon>Bacteria</taxon>
        <taxon>Pseudomonadati</taxon>
        <taxon>Pseudomonadota</taxon>
        <taxon>Gammaproteobacteria</taxon>
        <taxon>Alteromonadales</taxon>
        <taxon>Shewanellaceae</taxon>
        <taxon>Shewanella</taxon>
    </lineage>
</organism>
<keyword id="KW-0963">Cytoplasm</keyword>
<keyword id="KW-0312">Gluconeogenesis</keyword>
<keyword id="KW-0324">Glycolysis</keyword>
<keyword id="KW-0413">Isomerase</keyword>
<keyword id="KW-1185">Reference proteome</keyword>
<comment type="function">
    <text evidence="1">Catalyzes the reversible isomerization of glucose-6-phosphate to fructose-6-phosphate.</text>
</comment>
<comment type="catalytic activity">
    <reaction evidence="1">
        <text>alpha-D-glucose 6-phosphate = beta-D-fructose 6-phosphate</text>
        <dbReference type="Rhea" id="RHEA:11816"/>
        <dbReference type="ChEBI" id="CHEBI:57634"/>
        <dbReference type="ChEBI" id="CHEBI:58225"/>
        <dbReference type="EC" id="5.3.1.9"/>
    </reaction>
</comment>
<comment type="pathway">
    <text evidence="1">Carbohydrate biosynthesis; gluconeogenesis.</text>
</comment>
<comment type="pathway">
    <text evidence="1">Carbohydrate degradation; glycolysis; D-glyceraldehyde 3-phosphate and glycerone phosphate from D-glucose: step 2/4.</text>
</comment>
<comment type="subcellular location">
    <subcellularLocation>
        <location evidence="1">Cytoplasm</location>
    </subcellularLocation>
</comment>
<comment type="similarity">
    <text evidence="1">Belongs to the GPI family.</text>
</comment>
<dbReference type="EC" id="5.3.1.9" evidence="1"/>
<dbReference type="EMBL" id="CP000447">
    <property type="protein sequence ID" value="ABI72740.1"/>
    <property type="molecule type" value="Genomic_DNA"/>
</dbReference>
<dbReference type="RefSeq" id="WP_011638349.1">
    <property type="nucleotide sequence ID" value="NC_008345.1"/>
</dbReference>
<dbReference type="SMR" id="Q07Z24"/>
<dbReference type="STRING" id="318167.Sfri_2901"/>
<dbReference type="KEGG" id="sfr:Sfri_2901"/>
<dbReference type="eggNOG" id="COG0166">
    <property type="taxonomic scope" value="Bacteria"/>
</dbReference>
<dbReference type="HOGENOM" id="CLU_017947_3_1_6"/>
<dbReference type="OrthoDB" id="140919at2"/>
<dbReference type="UniPathway" id="UPA00109">
    <property type="reaction ID" value="UER00181"/>
</dbReference>
<dbReference type="UniPathway" id="UPA00138"/>
<dbReference type="Proteomes" id="UP000000684">
    <property type="component" value="Chromosome"/>
</dbReference>
<dbReference type="GO" id="GO:0005829">
    <property type="term" value="C:cytosol"/>
    <property type="evidence" value="ECO:0007669"/>
    <property type="project" value="TreeGrafter"/>
</dbReference>
<dbReference type="GO" id="GO:0097367">
    <property type="term" value="F:carbohydrate derivative binding"/>
    <property type="evidence" value="ECO:0007669"/>
    <property type="project" value="InterPro"/>
</dbReference>
<dbReference type="GO" id="GO:0004347">
    <property type="term" value="F:glucose-6-phosphate isomerase activity"/>
    <property type="evidence" value="ECO:0007669"/>
    <property type="project" value="UniProtKB-UniRule"/>
</dbReference>
<dbReference type="GO" id="GO:0048029">
    <property type="term" value="F:monosaccharide binding"/>
    <property type="evidence" value="ECO:0007669"/>
    <property type="project" value="TreeGrafter"/>
</dbReference>
<dbReference type="GO" id="GO:0006094">
    <property type="term" value="P:gluconeogenesis"/>
    <property type="evidence" value="ECO:0007669"/>
    <property type="project" value="UniProtKB-UniRule"/>
</dbReference>
<dbReference type="GO" id="GO:0051156">
    <property type="term" value="P:glucose 6-phosphate metabolic process"/>
    <property type="evidence" value="ECO:0007669"/>
    <property type="project" value="TreeGrafter"/>
</dbReference>
<dbReference type="GO" id="GO:0006096">
    <property type="term" value="P:glycolytic process"/>
    <property type="evidence" value="ECO:0007669"/>
    <property type="project" value="UniProtKB-UniRule"/>
</dbReference>
<dbReference type="CDD" id="cd05015">
    <property type="entry name" value="SIS_PGI_1"/>
    <property type="match status" value="1"/>
</dbReference>
<dbReference type="CDD" id="cd05016">
    <property type="entry name" value="SIS_PGI_2"/>
    <property type="match status" value="1"/>
</dbReference>
<dbReference type="FunFam" id="3.40.50.10490:FF:000018">
    <property type="entry name" value="Glucose-6-phosphate isomerase"/>
    <property type="match status" value="1"/>
</dbReference>
<dbReference type="Gene3D" id="1.10.1390.10">
    <property type="match status" value="1"/>
</dbReference>
<dbReference type="Gene3D" id="3.40.50.10490">
    <property type="entry name" value="Glucose-6-phosphate isomerase like protein, domain 1"/>
    <property type="match status" value="2"/>
</dbReference>
<dbReference type="HAMAP" id="MF_00473">
    <property type="entry name" value="G6P_isomerase"/>
    <property type="match status" value="1"/>
</dbReference>
<dbReference type="InterPro" id="IPR001672">
    <property type="entry name" value="G6P_Isomerase"/>
</dbReference>
<dbReference type="InterPro" id="IPR023096">
    <property type="entry name" value="G6P_Isomerase_C"/>
</dbReference>
<dbReference type="InterPro" id="IPR018189">
    <property type="entry name" value="Phosphoglucose_isomerase_CS"/>
</dbReference>
<dbReference type="InterPro" id="IPR046348">
    <property type="entry name" value="SIS_dom_sf"/>
</dbReference>
<dbReference type="InterPro" id="IPR035476">
    <property type="entry name" value="SIS_PGI_1"/>
</dbReference>
<dbReference type="InterPro" id="IPR035482">
    <property type="entry name" value="SIS_PGI_2"/>
</dbReference>
<dbReference type="NCBIfam" id="NF001211">
    <property type="entry name" value="PRK00179.1"/>
    <property type="match status" value="1"/>
</dbReference>
<dbReference type="PANTHER" id="PTHR11469">
    <property type="entry name" value="GLUCOSE-6-PHOSPHATE ISOMERASE"/>
    <property type="match status" value="1"/>
</dbReference>
<dbReference type="PANTHER" id="PTHR11469:SF1">
    <property type="entry name" value="GLUCOSE-6-PHOSPHATE ISOMERASE"/>
    <property type="match status" value="1"/>
</dbReference>
<dbReference type="Pfam" id="PF00342">
    <property type="entry name" value="PGI"/>
    <property type="match status" value="1"/>
</dbReference>
<dbReference type="PRINTS" id="PR00662">
    <property type="entry name" value="G6PISOMERASE"/>
</dbReference>
<dbReference type="SUPFAM" id="SSF53697">
    <property type="entry name" value="SIS domain"/>
    <property type="match status" value="1"/>
</dbReference>
<dbReference type="PROSITE" id="PS00765">
    <property type="entry name" value="P_GLUCOSE_ISOMERASE_1"/>
    <property type="match status" value="1"/>
</dbReference>
<dbReference type="PROSITE" id="PS00174">
    <property type="entry name" value="P_GLUCOSE_ISOMERASE_2"/>
    <property type="match status" value="1"/>
</dbReference>
<dbReference type="PROSITE" id="PS51463">
    <property type="entry name" value="P_GLUCOSE_ISOMERASE_3"/>
    <property type="match status" value="1"/>
</dbReference>
<proteinExistence type="inferred from homology"/>
<accession>Q07Z24</accession>